<protein>
    <recommendedName>
        <fullName evidence="1">Ribonuclease Z</fullName>
        <shortName evidence="1">RNase Z</shortName>
        <ecNumber evidence="1">3.1.26.11</ecNumber>
    </recommendedName>
    <alternativeName>
        <fullName evidence="1">tRNA 3 endonuclease</fullName>
    </alternativeName>
    <alternativeName>
        <fullName evidence="1">tRNase Z</fullName>
    </alternativeName>
</protein>
<reference key="1">
    <citation type="journal article" date="1998" name="Science">
        <title>Genome sequence of an obligate intracellular pathogen of humans: Chlamydia trachomatis.</title>
        <authorList>
            <person name="Stephens R.S."/>
            <person name="Kalman S."/>
            <person name="Lammel C.J."/>
            <person name="Fan J."/>
            <person name="Marathe R."/>
            <person name="Aravind L."/>
            <person name="Mitchell W.P."/>
            <person name="Olinger L."/>
            <person name="Tatusov R.L."/>
            <person name="Zhao Q."/>
            <person name="Koonin E.V."/>
            <person name="Davis R.W."/>
        </authorList>
    </citation>
    <scope>NUCLEOTIDE SEQUENCE [LARGE SCALE GENOMIC DNA]</scope>
    <source>
        <strain>ATCC VR-885 / DSM 19411 / UW-3/Cx</strain>
    </source>
</reference>
<comment type="function">
    <text evidence="1">Zinc phosphodiesterase, which displays some tRNA 3'-processing endonuclease activity. Probably involved in tRNA maturation, by removing a 3'-trailer from precursor tRNA.</text>
</comment>
<comment type="catalytic activity">
    <reaction evidence="1">
        <text>Endonucleolytic cleavage of RNA, removing extra 3' nucleotides from tRNA precursor, generating 3' termini of tRNAs. A 3'-hydroxy group is left at the tRNA terminus and a 5'-phosphoryl group is left at the trailer molecule.</text>
        <dbReference type="EC" id="3.1.26.11"/>
    </reaction>
</comment>
<comment type="cofactor">
    <cofactor evidence="1">
        <name>Zn(2+)</name>
        <dbReference type="ChEBI" id="CHEBI:29105"/>
    </cofactor>
    <text evidence="1">Binds 2 Zn(2+) ions.</text>
</comment>
<comment type="subunit">
    <text evidence="1">Homodimer.</text>
</comment>
<comment type="similarity">
    <text evidence="1">Belongs to the RNase Z family.</text>
</comment>
<evidence type="ECO:0000255" key="1">
    <source>
        <dbReference type="HAMAP-Rule" id="MF_01818"/>
    </source>
</evidence>
<gene>
    <name evidence="1" type="primary">rnz</name>
    <name type="ordered locus">CT_346</name>
</gene>
<proteinExistence type="inferred from homology"/>
<sequence length="304" mass="34660">MSYRGLTILGCSSQQPTRHRNHGAYLLRWNGEGLLFDPGEGTQRQFIYANIAPTVVSRIFISHFHGDHCLGLGSMLMRLNLDRVLHPIHCYYPASGKKYFDRLRYSTIYHETIKVIEHPIDREGIVEDFGNFRIESRQLDHLVDTLGWRITEPDTTKFIPEKIKAAGLKGPIMQELINKGQVKVNDTIVHLDDVSYTRKGDSIAVVADSLPCQAIVDLARNARILLCESTYLEEHSHLAKSHYHMTAKQAAEQAKRAEVQQLILTHFSARYNTTEEFVQEAGEIFPNVFAAEEFCSYEFPKNPS</sequence>
<keyword id="KW-0255">Endonuclease</keyword>
<keyword id="KW-0378">Hydrolase</keyword>
<keyword id="KW-0479">Metal-binding</keyword>
<keyword id="KW-0540">Nuclease</keyword>
<keyword id="KW-1185">Reference proteome</keyword>
<keyword id="KW-0819">tRNA processing</keyword>
<keyword id="KW-0862">Zinc</keyword>
<organism>
    <name type="scientific">Chlamydia trachomatis serovar D (strain ATCC VR-885 / DSM 19411 / UW-3/Cx)</name>
    <dbReference type="NCBI Taxonomy" id="272561"/>
    <lineage>
        <taxon>Bacteria</taxon>
        <taxon>Pseudomonadati</taxon>
        <taxon>Chlamydiota</taxon>
        <taxon>Chlamydiia</taxon>
        <taxon>Chlamydiales</taxon>
        <taxon>Chlamydiaceae</taxon>
        <taxon>Chlamydia/Chlamydophila group</taxon>
        <taxon>Chlamydia</taxon>
    </lineage>
</organism>
<feature type="chain" id="PRO_0000155858" description="Ribonuclease Z">
    <location>
        <begin position="1"/>
        <end position="304"/>
    </location>
</feature>
<feature type="active site" description="Proton acceptor" evidence="1">
    <location>
        <position position="67"/>
    </location>
</feature>
<feature type="binding site" evidence="1">
    <location>
        <position position="63"/>
    </location>
    <ligand>
        <name>Zn(2+)</name>
        <dbReference type="ChEBI" id="CHEBI:29105"/>
        <label>1</label>
        <note>catalytic</note>
    </ligand>
</feature>
<feature type="binding site" evidence="1">
    <location>
        <position position="65"/>
    </location>
    <ligand>
        <name>Zn(2+)</name>
        <dbReference type="ChEBI" id="CHEBI:29105"/>
        <label>1</label>
        <note>catalytic</note>
    </ligand>
</feature>
<feature type="binding site" evidence="1">
    <location>
        <position position="67"/>
    </location>
    <ligand>
        <name>Zn(2+)</name>
        <dbReference type="ChEBI" id="CHEBI:29105"/>
        <label>2</label>
        <note>catalytic</note>
    </ligand>
</feature>
<feature type="binding site" evidence="1">
    <location>
        <position position="68"/>
    </location>
    <ligand>
        <name>Zn(2+)</name>
        <dbReference type="ChEBI" id="CHEBI:29105"/>
        <label>2</label>
        <note>catalytic</note>
    </ligand>
</feature>
<feature type="binding site" evidence="1">
    <location>
        <position position="141"/>
    </location>
    <ligand>
        <name>Zn(2+)</name>
        <dbReference type="ChEBI" id="CHEBI:29105"/>
        <label>1</label>
        <note>catalytic</note>
    </ligand>
</feature>
<feature type="binding site" evidence="1">
    <location>
        <position position="208"/>
    </location>
    <ligand>
        <name>Zn(2+)</name>
        <dbReference type="ChEBI" id="CHEBI:29105"/>
        <label>1</label>
        <note>catalytic</note>
    </ligand>
</feature>
<feature type="binding site" evidence="1">
    <location>
        <position position="208"/>
    </location>
    <ligand>
        <name>Zn(2+)</name>
        <dbReference type="ChEBI" id="CHEBI:29105"/>
        <label>2</label>
        <note>catalytic</note>
    </ligand>
</feature>
<feature type="binding site" evidence="1">
    <location>
        <position position="266"/>
    </location>
    <ligand>
        <name>Zn(2+)</name>
        <dbReference type="ChEBI" id="CHEBI:29105"/>
        <label>2</label>
        <note>catalytic</note>
    </ligand>
</feature>
<name>RNZ_CHLTR</name>
<accession>O84350</accession>
<dbReference type="EC" id="3.1.26.11" evidence="1"/>
<dbReference type="EMBL" id="AE001273">
    <property type="protein sequence ID" value="AAC67941.1"/>
    <property type="molecule type" value="Genomic_DNA"/>
</dbReference>
<dbReference type="PIR" id="C71525">
    <property type="entry name" value="C71525"/>
</dbReference>
<dbReference type="RefSeq" id="WP_009871697.1">
    <property type="nucleotide sequence ID" value="NC_000117.1"/>
</dbReference>
<dbReference type="SMR" id="O84350"/>
<dbReference type="FunCoup" id="O84350">
    <property type="interactions" value="165"/>
</dbReference>
<dbReference type="STRING" id="272561.CT_346"/>
<dbReference type="EnsemblBacteria" id="AAC67941">
    <property type="protein sequence ID" value="AAC67941"/>
    <property type="gene ID" value="CT_346"/>
</dbReference>
<dbReference type="KEGG" id="ctr:CT_346"/>
<dbReference type="PATRIC" id="fig|272561.5.peg.374"/>
<dbReference type="HOGENOM" id="CLU_031317_2_1_0"/>
<dbReference type="InParanoid" id="O84350"/>
<dbReference type="OrthoDB" id="9800940at2"/>
<dbReference type="Proteomes" id="UP000000431">
    <property type="component" value="Chromosome"/>
</dbReference>
<dbReference type="GO" id="GO:0042781">
    <property type="term" value="F:3'-tRNA processing endoribonuclease activity"/>
    <property type="evidence" value="ECO:0000318"/>
    <property type="project" value="GO_Central"/>
</dbReference>
<dbReference type="GO" id="GO:0008270">
    <property type="term" value="F:zinc ion binding"/>
    <property type="evidence" value="ECO:0007669"/>
    <property type="project" value="UniProtKB-UniRule"/>
</dbReference>
<dbReference type="CDD" id="cd07717">
    <property type="entry name" value="RNaseZ_ZiPD-like_MBL-fold"/>
    <property type="match status" value="1"/>
</dbReference>
<dbReference type="FunFam" id="3.60.15.10:FF:000098">
    <property type="entry name" value="Ribonuclease Z"/>
    <property type="match status" value="1"/>
</dbReference>
<dbReference type="Gene3D" id="3.60.15.10">
    <property type="entry name" value="Ribonuclease Z/Hydroxyacylglutathione hydrolase-like"/>
    <property type="match status" value="1"/>
</dbReference>
<dbReference type="HAMAP" id="MF_01818">
    <property type="entry name" value="RNase_Z_BN"/>
    <property type="match status" value="1"/>
</dbReference>
<dbReference type="InterPro" id="IPR001279">
    <property type="entry name" value="Metallo-B-lactamas"/>
</dbReference>
<dbReference type="InterPro" id="IPR036866">
    <property type="entry name" value="RibonucZ/Hydroxyglut_hydro"/>
</dbReference>
<dbReference type="InterPro" id="IPR013471">
    <property type="entry name" value="RNase_Z/BN"/>
</dbReference>
<dbReference type="NCBIfam" id="NF000801">
    <property type="entry name" value="PRK00055.1-3"/>
    <property type="match status" value="1"/>
</dbReference>
<dbReference type="NCBIfam" id="NF000804">
    <property type="entry name" value="PRK00055.2-1"/>
    <property type="match status" value="1"/>
</dbReference>
<dbReference type="NCBIfam" id="TIGR02651">
    <property type="entry name" value="RNase_Z"/>
    <property type="match status" value="1"/>
</dbReference>
<dbReference type="PANTHER" id="PTHR46018">
    <property type="entry name" value="ZINC PHOSPHODIESTERASE ELAC PROTEIN 1"/>
    <property type="match status" value="1"/>
</dbReference>
<dbReference type="PANTHER" id="PTHR46018:SF2">
    <property type="entry name" value="ZINC PHOSPHODIESTERASE ELAC PROTEIN 1"/>
    <property type="match status" value="1"/>
</dbReference>
<dbReference type="Pfam" id="PF00753">
    <property type="entry name" value="Lactamase_B"/>
    <property type="match status" value="1"/>
</dbReference>
<dbReference type="SUPFAM" id="SSF56281">
    <property type="entry name" value="Metallo-hydrolase/oxidoreductase"/>
    <property type="match status" value="1"/>
</dbReference>